<sequence>MENQVLTPHVYWAQRHRELYLRVELSDVQNPAISITENVLHFKAQGHGAKGDNVYEFHLEFLDLVKPEPVYKLTQRQVNITVQKKVSQWWERLTKQEKRPLFLAPDFDRWLDESDAEMELRAKEEERLNKLRLESEGSPETLTNLRKGYLFMYNLVQFLGFSWIFVNLTVRFCILGKESFYDTFHTVADMMYFCQMLAVVETINAAIGVTTSPVLPSLIQLLGRNFILFIIFGTMEEMQNKAVVFFVFYLWSAIEIFRYSFYMLTCIDMDWKVLTWLRYTLWIPLYPLGCLAEAVSVIQSIPIFNETGRFSFTLPYPVKIKVRFSFFLQIYLIMIFLGLYINFRHLYKQRRRRYGQKKKKIH</sequence>
<organism>
    <name type="scientific">Homo sapiens</name>
    <name type="common">Human</name>
    <dbReference type="NCBI Taxonomy" id="9606"/>
    <lineage>
        <taxon>Eukaryota</taxon>
        <taxon>Metazoa</taxon>
        <taxon>Chordata</taxon>
        <taxon>Craniata</taxon>
        <taxon>Vertebrata</taxon>
        <taxon>Euteleostomi</taxon>
        <taxon>Mammalia</taxon>
        <taxon>Eutheria</taxon>
        <taxon>Euarchontoglires</taxon>
        <taxon>Primates</taxon>
        <taxon>Haplorrhini</taxon>
        <taxon>Catarrhini</taxon>
        <taxon>Hominidae</taxon>
        <taxon>Homo</taxon>
    </lineage>
</organism>
<gene>
    <name evidence="11 14" type="primary">HACD3</name>
    <name evidence="9" type="synonym">BIND1</name>
    <name type="synonym">PTPLAD1</name>
</gene>
<name>HACD3_HUMAN</name>
<accession>Q9P035</accession>
<accession>A0PJA1</accession>
<accession>B4DRF4</accession>
<accession>Q280Z3</accession>
<accession>Q6PD63</accession>
<accession>Q8IUI5</accession>
<accession>Q8NC86</accession>
<accession>Q8NCB1</accession>
<accession>Q96T12</accession>
<accession>Q9NQA7</accession>
<dbReference type="EC" id="4.2.1.134" evidence="7"/>
<dbReference type="EMBL" id="AJ271091">
    <property type="protein sequence ID" value="CAB69070.1"/>
    <property type="molecule type" value="mRNA"/>
</dbReference>
<dbReference type="EMBL" id="AF161470">
    <property type="protein sequence ID" value="AAF29085.1"/>
    <property type="status" value="ALT_FRAME"/>
    <property type="molecule type" value="mRNA"/>
</dbReference>
<dbReference type="EMBL" id="AK027421">
    <property type="protein sequence ID" value="BAB55101.1"/>
    <property type="molecule type" value="mRNA"/>
</dbReference>
<dbReference type="EMBL" id="AK074857">
    <property type="protein sequence ID" value="BAC11249.1"/>
    <property type="status" value="ALT_FRAME"/>
    <property type="molecule type" value="mRNA"/>
</dbReference>
<dbReference type="EMBL" id="AK074898">
    <property type="protein sequence ID" value="BAC11277.1"/>
    <property type="molecule type" value="mRNA"/>
</dbReference>
<dbReference type="EMBL" id="AK299234">
    <property type="protein sequence ID" value="BAG61266.1"/>
    <property type="molecule type" value="mRNA"/>
</dbReference>
<dbReference type="EMBL" id="AC011846">
    <property type="status" value="NOT_ANNOTATED_CDS"/>
    <property type="molecule type" value="Genomic_DNA"/>
</dbReference>
<dbReference type="EMBL" id="AC027220">
    <property type="status" value="NOT_ANNOTATED_CDS"/>
    <property type="molecule type" value="Genomic_DNA"/>
</dbReference>
<dbReference type="EMBL" id="BC019873">
    <property type="protein sequence ID" value="AAH19873.1"/>
    <property type="molecule type" value="mRNA"/>
</dbReference>
<dbReference type="EMBL" id="BC035508">
    <property type="protein sequence ID" value="AAH35508.1"/>
    <property type="molecule type" value="mRNA"/>
</dbReference>
<dbReference type="EMBL" id="BC047685">
    <property type="protein sequence ID" value="AAH47685.1"/>
    <property type="molecule type" value="mRNA"/>
</dbReference>
<dbReference type="EMBL" id="BC058912">
    <property type="protein sequence ID" value="AAH58912.1"/>
    <property type="molecule type" value="mRNA"/>
</dbReference>
<dbReference type="EMBL" id="DQ251107">
    <property type="protein sequence ID" value="ABB83547.1"/>
    <property type="molecule type" value="Genomic_DNA"/>
</dbReference>
<dbReference type="CCDS" id="CCDS45282.1">
    <molecule id="Q9P035-1"/>
</dbReference>
<dbReference type="RefSeq" id="NP_057479.2">
    <molecule id="Q9P035-1"/>
    <property type="nucleotide sequence ID" value="NM_016395.4"/>
</dbReference>
<dbReference type="SMR" id="Q9P035"/>
<dbReference type="BioGRID" id="119570">
    <property type="interactions" value="272"/>
</dbReference>
<dbReference type="FunCoup" id="Q9P035">
    <property type="interactions" value="1346"/>
</dbReference>
<dbReference type="IntAct" id="Q9P035">
    <property type="interactions" value="115"/>
</dbReference>
<dbReference type="MINT" id="Q9P035"/>
<dbReference type="STRING" id="9606.ENSP00000261875"/>
<dbReference type="SwissLipids" id="SLP:000000439"/>
<dbReference type="GlyGen" id="Q9P035">
    <property type="glycosylation" value="2 sites, 1 N-linked glycan (1 site), 1 O-linked glycan (1 site)"/>
</dbReference>
<dbReference type="iPTMnet" id="Q9P035"/>
<dbReference type="PhosphoSitePlus" id="Q9P035"/>
<dbReference type="SwissPalm" id="Q9P035"/>
<dbReference type="BioMuta" id="HACD3"/>
<dbReference type="DMDM" id="166199462"/>
<dbReference type="jPOST" id="Q9P035"/>
<dbReference type="MassIVE" id="Q9P035"/>
<dbReference type="PaxDb" id="9606-ENSP00000261875"/>
<dbReference type="PeptideAtlas" id="Q9P035"/>
<dbReference type="ProteomicsDB" id="4949"/>
<dbReference type="ProteomicsDB" id="83540">
    <molecule id="Q9P035-1"/>
</dbReference>
<dbReference type="Pumba" id="Q9P035"/>
<dbReference type="TopDownProteomics" id="Q9P035-1">
    <molecule id="Q9P035-1"/>
</dbReference>
<dbReference type="Antibodypedia" id="7067">
    <property type="antibodies" value="111 antibodies from 18 providers"/>
</dbReference>
<dbReference type="DNASU" id="51495"/>
<dbReference type="Ensembl" id="ENST00000261875.10">
    <molecule id="Q9P035-1"/>
    <property type="protein sequence ID" value="ENSP00000261875.5"/>
    <property type="gene ID" value="ENSG00000074696.13"/>
</dbReference>
<dbReference type="Ensembl" id="ENST00000442729.6">
    <molecule id="Q9P035-2"/>
    <property type="protein sequence ID" value="ENSP00000392491.2"/>
    <property type="gene ID" value="ENSG00000074696.13"/>
</dbReference>
<dbReference type="GeneID" id="51495"/>
<dbReference type="KEGG" id="hsa:51495"/>
<dbReference type="MANE-Select" id="ENST00000261875.10">
    <property type="protein sequence ID" value="ENSP00000261875.5"/>
    <property type="RefSeq nucleotide sequence ID" value="NM_016395.4"/>
    <property type="RefSeq protein sequence ID" value="NP_057479.2"/>
</dbReference>
<dbReference type="UCSC" id="uc002apc.4">
    <molecule id="Q9P035-1"/>
    <property type="organism name" value="human"/>
</dbReference>
<dbReference type="AGR" id="HGNC:24175"/>
<dbReference type="CTD" id="51495"/>
<dbReference type="DisGeNET" id="51495"/>
<dbReference type="GeneCards" id="HACD3"/>
<dbReference type="HGNC" id="HGNC:24175">
    <property type="gene designation" value="HACD3"/>
</dbReference>
<dbReference type="HPA" id="ENSG00000074696">
    <property type="expression patterns" value="Low tissue specificity"/>
</dbReference>
<dbReference type="MIM" id="615940">
    <property type="type" value="gene"/>
</dbReference>
<dbReference type="neXtProt" id="NX_Q9P035"/>
<dbReference type="OpenTargets" id="ENSG00000074696"/>
<dbReference type="PharmGKB" id="PA142671113"/>
<dbReference type="VEuPathDB" id="HostDB:ENSG00000074696"/>
<dbReference type="eggNOG" id="KOG3187">
    <property type="taxonomic scope" value="Eukaryota"/>
</dbReference>
<dbReference type="GeneTree" id="ENSGT00530000062962"/>
<dbReference type="HOGENOM" id="CLU_046712_0_0_1"/>
<dbReference type="InParanoid" id="Q9P035"/>
<dbReference type="OMA" id="SYLVMSH"/>
<dbReference type="OrthoDB" id="2157530at2759"/>
<dbReference type="PAN-GO" id="Q9P035">
    <property type="GO annotations" value="5 GO annotations based on evolutionary models"/>
</dbReference>
<dbReference type="PhylomeDB" id="Q9P035"/>
<dbReference type="TreeFam" id="TF313326"/>
<dbReference type="PathwayCommons" id="Q9P035"/>
<dbReference type="Reactome" id="R-HSA-75876">
    <property type="pathway name" value="Synthesis of very long-chain fatty acyl-CoAs"/>
</dbReference>
<dbReference type="SABIO-RK" id="Q9P035"/>
<dbReference type="SignaLink" id="Q9P035"/>
<dbReference type="SIGNOR" id="Q9P035"/>
<dbReference type="UniPathway" id="UPA00094"/>
<dbReference type="BioGRID-ORCS" id="51495">
    <property type="hits" value="5 hits in 1067 CRISPR screens"/>
</dbReference>
<dbReference type="CD-CODE" id="FB4E32DD">
    <property type="entry name" value="Presynaptic clusters and postsynaptic densities"/>
</dbReference>
<dbReference type="ChiTaRS" id="HACD3">
    <property type="organism name" value="human"/>
</dbReference>
<dbReference type="GeneWiki" id="PTPLAD1"/>
<dbReference type="GenomeRNAi" id="51495"/>
<dbReference type="Pharos" id="Q9P035">
    <property type="development level" value="Tbio"/>
</dbReference>
<dbReference type="PRO" id="PR:Q9P035"/>
<dbReference type="Proteomes" id="UP000005640">
    <property type="component" value="Chromosome 15"/>
</dbReference>
<dbReference type="RNAct" id="Q9P035">
    <property type="molecule type" value="protein"/>
</dbReference>
<dbReference type="Bgee" id="ENSG00000074696">
    <property type="expression patterns" value="Expressed in pons and 192 other cell types or tissues"/>
</dbReference>
<dbReference type="ExpressionAtlas" id="Q9P035">
    <property type="expression patterns" value="baseline and differential"/>
</dbReference>
<dbReference type="GO" id="GO:0005783">
    <property type="term" value="C:endoplasmic reticulum"/>
    <property type="evidence" value="ECO:0000314"/>
    <property type="project" value="HPA"/>
</dbReference>
<dbReference type="GO" id="GO:0005789">
    <property type="term" value="C:endoplasmic reticulum membrane"/>
    <property type="evidence" value="ECO:0000318"/>
    <property type="project" value="GO_Central"/>
</dbReference>
<dbReference type="GO" id="GO:0005925">
    <property type="term" value="C:focal adhesion"/>
    <property type="evidence" value="ECO:0007005"/>
    <property type="project" value="UniProtKB"/>
</dbReference>
<dbReference type="GO" id="GO:0031965">
    <property type="term" value="C:nuclear membrane"/>
    <property type="evidence" value="ECO:0000314"/>
    <property type="project" value="HPA"/>
</dbReference>
<dbReference type="GO" id="GO:0018812">
    <property type="term" value="F:3-hydroxyacyl-CoA dehydratase activity"/>
    <property type="evidence" value="ECO:0000318"/>
    <property type="project" value="GO_Central"/>
</dbReference>
<dbReference type="GO" id="GO:0019899">
    <property type="term" value="F:enzyme binding"/>
    <property type="evidence" value="ECO:0000314"/>
    <property type="project" value="UniProtKB"/>
</dbReference>
<dbReference type="GO" id="GO:0005096">
    <property type="term" value="F:GTPase activator activity"/>
    <property type="evidence" value="ECO:0000304"/>
    <property type="project" value="ProtInc"/>
</dbReference>
<dbReference type="GO" id="GO:0102158">
    <property type="term" value="F:very-long-chain (3R)-3-hydroxyacyl-CoA dehydratase activity"/>
    <property type="evidence" value="ECO:0000314"/>
    <property type="project" value="UniProtKB"/>
</dbReference>
<dbReference type="GO" id="GO:0007249">
    <property type="term" value="P:canonical NF-kappaB signal transduction"/>
    <property type="evidence" value="ECO:0000304"/>
    <property type="project" value="ProtInc"/>
</dbReference>
<dbReference type="GO" id="GO:0030497">
    <property type="term" value="P:fatty acid elongation"/>
    <property type="evidence" value="ECO:0000314"/>
    <property type="project" value="UniProtKB"/>
</dbReference>
<dbReference type="GO" id="GO:0007254">
    <property type="term" value="P:JNK cascade"/>
    <property type="evidence" value="ECO:0007669"/>
    <property type="project" value="Ensembl"/>
</dbReference>
<dbReference type="GO" id="GO:1902532">
    <property type="term" value="P:negative regulation of intracellular signal transduction"/>
    <property type="evidence" value="ECO:0007669"/>
    <property type="project" value="Ensembl"/>
</dbReference>
<dbReference type="GO" id="GO:0046726">
    <property type="term" value="P:positive regulation by virus of viral protein levels in host cell"/>
    <property type="evidence" value="ECO:0000315"/>
    <property type="project" value="AgBase"/>
</dbReference>
<dbReference type="GO" id="GO:0045070">
    <property type="term" value="P:positive regulation of viral genome replication"/>
    <property type="evidence" value="ECO:0000315"/>
    <property type="project" value="AgBase"/>
</dbReference>
<dbReference type="GO" id="GO:0016601">
    <property type="term" value="P:Rac protein signal transduction"/>
    <property type="evidence" value="ECO:0000303"/>
    <property type="project" value="UniProtKB"/>
</dbReference>
<dbReference type="GO" id="GO:0007266">
    <property type="term" value="P:Rho protein signal transduction"/>
    <property type="evidence" value="ECO:0007669"/>
    <property type="project" value="Ensembl"/>
</dbReference>
<dbReference type="GO" id="GO:0007264">
    <property type="term" value="P:small GTPase-mediated signal transduction"/>
    <property type="evidence" value="ECO:0000304"/>
    <property type="project" value="ProtInc"/>
</dbReference>
<dbReference type="GO" id="GO:0030148">
    <property type="term" value="P:sphingolipid biosynthetic process"/>
    <property type="evidence" value="ECO:0000318"/>
    <property type="project" value="GO_Central"/>
</dbReference>
<dbReference type="GO" id="GO:0042761">
    <property type="term" value="P:very long-chain fatty acid biosynthetic process"/>
    <property type="evidence" value="ECO:0000314"/>
    <property type="project" value="UniProtKB"/>
</dbReference>
<dbReference type="CDD" id="cd06465">
    <property type="entry name" value="p23_hB-ind1_like"/>
    <property type="match status" value="1"/>
</dbReference>
<dbReference type="FunFam" id="2.60.40.790:FF:000048">
    <property type="entry name" value="Very-long-chain (3R)-3-hydroxyacyl-CoA dehydratase"/>
    <property type="match status" value="1"/>
</dbReference>
<dbReference type="Gene3D" id="2.60.40.790">
    <property type="match status" value="1"/>
</dbReference>
<dbReference type="InterPro" id="IPR007052">
    <property type="entry name" value="CS_dom"/>
</dbReference>
<dbReference type="InterPro" id="IPR008978">
    <property type="entry name" value="HSP20-like_chaperone"/>
</dbReference>
<dbReference type="InterPro" id="IPR007482">
    <property type="entry name" value="Tyr_Pase-like_PTPLA"/>
</dbReference>
<dbReference type="PANTHER" id="PTHR11035">
    <property type="entry name" value="VERY-LONG-CHAIN (3R)-3-HYDROXYACYL-COA DEHYDRATASE"/>
    <property type="match status" value="1"/>
</dbReference>
<dbReference type="PANTHER" id="PTHR11035:SF20">
    <property type="entry name" value="VERY-LONG-CHAIN (3R)-3-HYDROXYACYL-COA DEHYDRATASE 3"/>
    <property type="match status" value="1"/>
</dbReference>
<dbReference type="Pfam" id="PF04387">
    <property type="entry name" value="PTPLA"/>
    <property type="match status" value="1"/>
</dbReference>
<dbReference type="SUPFAM" id="SSF49764">
    <property type="entry name" value="HSP20-like chaperones"/>
    <property type="match status" value="1"/>
</dbReference>
<dbReference type="PROSITE" id="PS51203">
    <property type="entry name" value="CS"/>
    <property type="match status" value="1"/>
</dbReference>
<evidence type="ECO:0000250" key="1">
    <source>
        <dbReference type="UniProtKB" id="P40857"/>
    </source>
</evidence>
<evidence type="ECO:0000250" key="2">
    <source>
        <dbReference type="UniProtKB" id="Q6Y1H2"/>
    </source>
</evidence>
<evidence type="ECO:0000255" key="3"/>
<evidence type="ECO:0000255" key="4">
    <source>
        <dbReference type="PROSITE-ProRule" id="PRU00547"/>
    </source>
</evidence>
<evidence type="ECO:0000269" key="5">
    <source>
    </source>
</evidence>
<evidence type="ECO:0000269" key="6">
    <source>
    </source>
</evidence>
<evidence type="ECO:0000269" key="7">
    <source>
    </source>
</evidence>
<evidence type="ECO:0000269" key="8">
    <source>
    </source>
</evidence>
<evidence type="ECO:0000303" key="9">
    <source>
    </source>
</evidence>
<evidence type="ECO:0000303" key="10">
    <source>
    </source>
</evidence>
<evidence type="ECO:0000303" key="11">
    <source>
    </source>
</evidence>
<evidence type="ECO:0000305" key="12"/>
<evidence type="ECO:0000305" key="13">
    <source>
    </source>
</evidence>
<evidence type="ECO:0000312" key="14">
    <source>
        <dbReference type="HGNC" id="HGNC:24175"/>
    </source>
</evidence>
<evidence type="ECO:0007744" key="15">
    <source>
    </source>
</evidence>
<evidence type="ECO:0007744" key="16">
    <source>
    </source>
</evidence>
<evidence type="ECO:0007744" key="17">
    <source>
    </source>
</evidence>
<evidence type="ECO:0007744" key="18">
    <source>
    </source>
</evidence>
<evidence type="ECO:0007744" key="19">
    <source>
    </source>
</evidence>
<evidence type="ECO:0007744" key="20">
    <source>
    </source>
</evidence>
<evidence type="ECO:0007744" key="21">
    <source>
    </source>
</evidence>
<evidence type="ECO:0007744" key="22">
    <source>
    </source>
</evidence>
<evidence type="ECO:0007744" key="23">
    <source>
    </source>
</evidence>
<evidence type="ECO:0007744" key="24">
    <source>
    </source>
</evidence>
<evidence type="ECO:0007744" key="25">
    <source>
    </source>
</evidence>
<reference key="1">
    <citation type="journal article" date="2000" name="J. Biol. Chem.">
        <title>B-ind1, a novel mediator of Rac1 signaling cloned from sodium butyrate-treated fibroblasts.</title>
        <authorList>
            <person name="Courilleau D."/>
            <person name="Chastre E."/>
            <person name="Sabbah M."/>
            <person name="Redeuilh G."/>
            <person name="Atfi A."/>
            <person name="Mester J."/>
        </authorList>
    </citation>
    <scope>NUCLEOTIDE SEQUENCE [MRNA] (ISOFORM 1)</scope>
    <scope>FUNCTION</scope>
    <scope>INTERACTION WITH RAC1</scope>
    <scope>TISSUE SPECIFICITY</scope>
</reference>
<reference key="2">
    <citation type="journal article" date="2000" name="Genome Res.">
        <title>Cloning and functional analysis of cDNAs with open reading frames for 300 previously undefined genes expressed in CD34+ hematopoietic stem/progenitor cells.</title>
        <authorList>
            <person name="Zhang Q.-H."/>
            <person name="Ye M."/>
            <person name="Wu X.-Y."/>
            <person name="Ren S.-X."/>
            <person name="Zhao M."/>
            <person name="Zhao C.-J."/>
            <person name="Fu G."/>
            <person name="Shen Y."/>
            <person name="Fan H.-Y."/>
            <person name="Lu G."/>
            <person name="Zhong M."/>
            <person name="Xu X.-R."/>
            <person name="Han Z.-G."/>
            <person name="Zhang J.-W."/>
            <person name="Tao J."/>
            <person name="Huang Q.-H."/>
            <person name="Zhou J."/>
            <person name="Hu G.-X."/>
            <person name="Gu J."/>
            <person name="Chen S.-J."/>
            <person name="Chen Z."/>
        </authorList>
    </citation>
    <scope>NUCLEOTIDE SEQUENCE [LARGE SCALE MRNA] (ISOFORM 1)</scope>
    <source>
        <tissue>Umbilical cord blood</tissue>
    </source>
</reference>
<reference key="3">
    <citation type="journal article" date="2004" name="Nat. Genet.">
        <title>Complete sequencing and characterization of 21,243 full-length human cDNAs.</title>
        <authorList>
            <person name="Ota T."/>
            <person name="Suzuki Y."/>
            <person name="Nishikawa T."/>
            <person name="Otsuki T."/>
            <person name="Sugiyama T."/>
            <person name="Irie R."/>
            <person name="Wakamatsu A."/>
            <person name="Hayashi K."/>
            <person name="Sato H."/>
            <person name="Nagai K."/>
            <person name="Kimura K."/>
            <person name="Makita H."/>
            <person name="Sekine M."/>
            <person name="Obayashi M."/>
            <person name="Nishi T."/>
            <person name="Shibahara T."/>
            <person name="Tanaka T."/>
            <person name="Ishii S."/>
            <person name="Yamamoto J."/>
            <person name="Saito K."/>
            <person name="Kawai Y."/>
            <person name="Isono Y."/>
            <person name="Nakamura Y."/>
            <person name="Nagahari K."/>
            <person name="Murakami K."/>
            <person name="Yasuda T."/>
            <person name="Iwayanagi T."/>
            <person name="Wagatsuma M."/>
            <person name="Shiratori A."/>
            <person name="Sudo H."/>
            <person name="Hosoiri T."/>
            <person name="Kaku Y."/>
            <person name="Kodaira H."/>
            <person name="Kondo H."/>
            <person name="Sugawara M."/>
            <person name="Takahashi M."/>
            <person name="Kanda K."/>
            <person name="Yokoi T."/>
            <person name="Furuya T."/>
            <person name="Kikkawa E."/>
            <person name="Omura Y."/>
            <person name="Abe K."/>
            <person name="Kamihara K."/>
            <person name="Katsuta N."/>
            <person name="Sato K."/>
            <person name="Tanikawa M."/>
            <person name="Yamazaki M."/>
            <person name="Ninomiya K."/>
            <person name="Ishibashi T."/>
            <person name="Yamashita H."/>
            <person name="Murakawa K."/>
            <person name="Fujimori K."/>
            <person name="Tanai H."/>
            <person name="Kimata M."/>
            <person name="Watanabe M."/>
            <person name="Hiraoka S."/>
            <person name="Chiba Y."/>
            <person name="Ishida S."/>
            <person name="Ono Y."/>
            <person name="Takiguchi S."/>
            <person name="Watanabe S."/>
            <person name="Yosida M."/>
            <person name="Hotuta T."/>
            <person name="Kusano J."/>
            <person name="Kanehori K."/>
            <person name="Takahashi-Fujii A."/>
            <person name="Hara H."/>
            <person name="Tanase T.-O."/>
            <person name="Nomura Y."/>
            <person name="Togiya S."/>
            <person name="Komai F."/>
            <person name="Hara R."/>
            <person name="Takeuchi K."/>
            <person name="Arita M."/>
            <person name="Imose N."/>
            <person name="Musashino K."/>
            <person name="Yuuki H."/>
            <person name="Oshima A."/>
            <person name="Sasaki N."/>
            <person name="Aotsuka S."/>
            <person name="Yoshikawa Y."/>
            <person name="Matsunawa H."/>
            <person name="Ichihara T."/>
            <person name="Shiohata N."/>
            <person name="Sano S."/>
            <person name="Moriya S."/>
            <person name="Momiyama H."/>
            <person name="Satoh N."/>
            <person name="Takami S."/>
            <person name="Terashima Y."/>
            <person name="Suzuki O."/>
            <person name="Nakagawa S."/>
            <person name="Senoh A."/>
            <person name="Mizoguchi H."/>
            <person name="Goto Y."/>
            <person name="Shimizu F."/>
            <person name="Wakebe H."/>
            <person name="Hishigaki H."/>
            <person name="Watanabe T."/>
            <person name="Sugiyama A."/>
            <person name="Takemoto M."/>
            <person name="Kawakami B."/>
            <person name="Yamazaki M."/>
            <person name="Watanabe K."/>
            <person name="Kumagai A."/>
            <person name="Itakura S."/>
            <person name="Fukuzumi Y."/>
            <person name="Fujimori Y."/>
            <person name="Komiyama M."/>
            <person name="Tashiro H."/>
            <person name="Tanigami A."/>
            <person name="Fujiwara T."/>
            <person name="Ono T."/>
            <person name="Yamada K."/>
            <person name="Fujii Y."/>
            <person name="Ozaki K."/>
            <person name="Hirao M."/>
            <person name="Ohmori Y."/>
            <person name="Kawabata A."/>
            <person name="Hikiji T."/>
            <person name="Kobatake N."/>
            <person name="Inagaki H."/>
            <person name="Ikema Y."/>
            <person name="Okamoto S."/>
            <person name="Okitani R."/>
            <person name="Kawakami T."/>
            <person name="Noguchi S."/>
            <person name="Itoh T."/>
            <person name="Shigeta K."/>
            <person name="Senba T."/>
            <person name="Matsumura K."/>
            <person name="Nakajima Y."/>
            <person name="Mizuno T."/>
            <person name="Morinaga M."/>
            <person name="Sasaki M."/>
            <person name="Togashi T."/>
            <person name="Oyama M."/>
            <person name="Hata H."/>
            <person name="Watanabe M."/>
            <person name="Komatsu T."/>
            <person name="Mizushima-Sugano J."/>
            <person name="Satoh T."/>
            <person name="Shirai Y."/>
            <person name="Takahashi Y."/>
            <person name="Nakagawa K."/>
            <person name="Okumura K."/>
            <person name="Nagase T."/>
            <person name="Nomura N."/>
            <person name="Kikuchi H."/>
            <person name="Masuho Y."/>
            <person name="Yamashita R."/>
            <person name="Nakai K."/>
            <person name="Yada T."/>
            <person name="Nakamura Y."/>
            <person name="Ohara O."/>
            <person name="Isogai T."/>
            <person name="Sugano S."/>
        </authorList>
    </citation>
    <scope>NUCLEOTIDE SEQUENCE [LARGE SCALE MRNA] (ISOFORMS 1 AND 2)</scope>
</reference>
<reference key="4">
    <citation type="journal article" date="2006" name="Nature">
        <title>Analysis of the DNA sequence and duplication history of human chromosome 15.</title>
        <authorList>
            <person name="Zody M.C."/>
            <person name="Garber M."/>
            <person name="Sharpe T."/>
            <person name="Young S.K."/>
            <person name="Rowen L."/>
            <person name="O'Neill K."/>
            <person name="Whittaker C.A."/>
            <person name="Kamal M."/>
            <person name="Chang J.L."/>
            <person name="Cuomo C.A."/>
            <person name="Dewar K."/>
            <person name="FitzGerald M.G."/>
            <person name="Kodira C.D."/>
            <person name="Madan A."/>
            <person name="Qin S."/>
            <person name="Yang X."/>
            <person name="Abbasi N."/>
            <person name="Abouelleil A."/>
            <person name="Arachchi H.M."/>
            <person name="Baradarani L."/>
            <person name="Birditt B."/>
            <person name="Bloom S."/>
            <person name="Bloom T."/>
            <person name="Borowsky M.L."/>
            <person name="Burke J."/>
            <person name="Butler J."/>
            <person name="Cook A."/>
            <person name="DeArellano K."/>
            <person name="DeCaprio D."/>
            <person name="Dorris L. III"/>
            <person name="Dors M."/>
            <person name="Eichler E.E."/>
            <person name="Engels R."/>
            <person name="Fahey J."/>
            <person name="Fleetwood P."/>
            <person name="Friedman C."/>
            <person name="Gearin G."/>
            <person name="Hall J.L."/>
            <person name="Hensley G."/>
            <person name="Johnson E."/>
            <person name="Jones C."/>
            <person name="Kamat A."/>
            <person name="Kaur A."/>
            <person name="Locke D.P."/>
            <person name="Madan A."/>
            <person name="Munson G."/>
            <person name="Jaffe D.B."/>
            <person name="Lui A."/>
            <person name="Macdonald P."/>
            <person name="Mauceli E."/>
            <person name="Naylor J.W."/>
            <person name="Nesbitt R."/>
            <person name="Nicol R."/>
            <person name="O'Leary S.B."/>
            <person name="Ratcliffe A."/>
            <person name="Rounsley S."/>
            <person name="She X."/>
            <person name="Sneddon K.M.B."/>
            <person name="Stewart S."/>
            <person name="Sougnez C."/>
            <person name="Stone S.M."/>
            <person name="Topham K."/>
            <person name="Vincent D."/>
            <person name="Wang S."/>
            <person name="Zimmer A.R."/>
            <person name="Birren B.W."/>
            <person name="Hood L."/>
            <person name="Lander E.S."/>
            <person name="Nusbaum C."/>
        </authorList>
    </citation>
    <scope>NUCLEOTIDE SEQUENCE [LARGE SCALE GENOMIC DNA]</scope>
</reference>
<reference key="5">
    <citation type="journal article" date="2004" name="Genome Res.">
        <title>The status, quality, and expansion of the NIH full-length cDNA project: the Mammalian Gene Collection (MGC).</title>
        <authorList>
            <consortium name="The MGC Project Team"/>
        </authorList>
    </citation>
    <scope>NUCLEOTIDE SEQUENCE [LARGE SCALE MRNA] (ISOFORM 1)</scope>
    <source>
        <tissue>B-cell</tissue>
        <tissue>Duodenum</tissue>
        <tissue>Eye</tissue>
        <tissue>Urinary bladder</tissue>
    </source>
</reference>
<reference key="6">
    <citation type="journal article" date="2006" name="Gene">
        <title>Human B-ind1 gene promoter: cloning and regulation by histone deacetylase inhibitors.</title>
        <authorList>
            <person name="Sabbah M."/>
            <person name="Saucier C."/>
            <person name="Redeuilh G."/>
        </authorList>
    </citation>
    <scope>NUCLEOTIDE SEQUENCE [GENOMIC DNA] OF 1-29</scope>
</reference>
<reference key="7">
    <citation type="journal article" date="2006" name="BMC Cancer">
        <title>SSeCKS/Gravin/AKAP12 attenuates expression of proliferative and angiogenic genes during suppression of v-Src-induced oncogenesis.</title>
        <authorList>
            <person name="Liu Y."/>
            <person name="Gao L."/>
            <person name="Gelman I.H."/>
        </authorList>
    </citation>
    <scope>INDUCTION BY AKAP12</scope>
</reference>
<reference key="8">
    <citation type="journal article" date="2006" name="Cell">
        <title>Global, in vivo, and site-specific phosphorylation dynamics in signaling networks.</title>
        <authorList>
            <person name="Olsen J.V."/>
            <person name="Blagoev B."/>
            <person name="Gnad F."/>
            <person name="Macek B."/>
            <person name="Kumar C."/>
            <person name="Mortensen P."/>
            <person name="Mann M."/>
        </authorList>
    </citation>
    <scope>PHOSPHORYLATION [LARGE SCALE ANALYSIS] AT SER-114</scope>
    <scope>IDENTIFICATION BY MASS SPECTROMETRY [LARGE SCALE ANALYSIS]</scope>
    <source>
        <tissue>Cervix carcinoma</tissue>
    </source>
</reference>
<reference key="9">
    <citation type="journal article" date="2008" name="FEBS Lett.">
        <title>Characterization of four mammalian 3-hydroxyacyl-CoA dehydratases involved in very long-chain fatty acid synthesis.</title>
        <authorList>
            <person name="Ikeda M."/>
            <person name="Kanao Y."/>
            <person name="Yamanaka M."/>
            <person name="Sakuraba H."/>
            <person name="Mizutani Y."/>
            <person name="Igarashi Y."/>
            <person name="Kihara A."/>
        </authorList>
    </citation>
    <scope>FUNCTION</scope>
    <scope>SUBCELLULAR LOCATION</scope>
    <scope>CATALYTIC ACTIVITY</scope>
    <scope>PATHWAY</scope>
    <scope>BIOPHYSICOCHEMICAL PROPERTIES</scope>
    <scope>TISSUE SPECIFICITY</scope>
    <scope>INTERACTION WITH ELOVL FAMILY</scope>
</reference>
<reference key="10">
    <citation type="journal article" date="2008" name="J. Proteome Res.">
        <title>Combining protein-based IMAC, peptide-based IMAC, and MudPIT for efficient phosphoproteomic analysis.</title>
        <authorList>
            <person name="Cantin G.T."/>
            <person name="Yi W."/>
            <person name="Lu B."/>
            <person name="Park S.K."/>
            <person name="Xu T."/>
            <person name="Lee J.-D."/>
            <person name="Yates J.R. III"/>
        </authorList>
    </citation>
    <scope>PHOSPHORYLATION [LARGE SCALE ANALYSIS] AT SER-114</scope>
    <scope>IDENTIFICATION BY MASS SPECTROMETRY [LARGE SCALE ANALYSIS]</scope>
    <source>
        <tissue>Cervix carcinoma</tissue>
    </source>
</reference>
<reference key="11">
    <citation type="journal article" date="2008" name="Mol. Cell">
        <title>Kinase-selective enrichment enables quantitative phosphoproteomics of the kinome across the cell cycle.</title>
        <authorList>
            <person name="Daub H."/>
            <person name="Olsen J.V."/>
            <person name="Bairlein M."/>
            <person name="Gnad F."/>
            <person name="Oppermann F.S."/>
            <person name="Korner R."/>
            <person name="Greff Z."/>
            <person name="Keri G."/>
            <person name="Stemmann O."/>
            <person name="Mann M."/>
        </authorList>
    </citation>
    <scope>PHOSPHORYLATION [LARGE SCALE ANALYSIS] AT SER-114</scope>
    <scope>IDENTIFICATION BY MASS SPECTROMETRY [LARGE SCALE ANALYSIS]</scope>
    <source>
        <tissue>Cervix carcinoma</tissue>
    </source>
</reference>
<reference key="12">
    <citation type="journal article" date="2008" name="Proc. Natl. Acad. Sci. U.S.A.">
        <title>A quantitative atlas of mitotic phosphorylation.</title>
        <authorList>
            <person name="Dephoure N."/>
            <person name="Zhou C."/>
            <person name="Villen J."/>
            <person name="Beausoleil S.A."/>
            <person name="Bakalarski C.E."/>
            <person name="Elledge S.J."/>
            <person name="Gygi S.P."/>
        </authorList>
    </citation>
    <scope>IDENTIFICATION BY MASS SPECTROMETRY [LARGE SCALE ANALYSIS]</scope>
    <source>
        <tissue>Cervix carcinoma</tissue>
    </source>
</reference>
<reference key="13">
    <citation type="journal article" date="2008" name="Proteomics">
        <title>Large-scale phosphoproteome analysis of human liver tissue by enrichment and fractionation of phosphopeptides with strong anion exchange chromatography.</title>
        <authorList>
            <person name="Han G."/>
            <person name="Ye M."/>
            <person name="Zhou H."/>
            <person name="Jiang X."/>
            <person name="Feng S."/>
            <person name="Jiang X."/>
            <person name="Tian R."/>
            <person name="Wan D."/>
            <person name="Zou H."/>
            <person name="Gu J."/>
        </authorList>
    </citation>
    <scope>PHOSPHORYLATION [LARGE SCALE ANALYSIS] AT SER-114</scope>
    <scope>IDENTIFICATION BY MASS SPECTROMETRY [LARGE SCALE ANALYSIS]</scope>
    <source>
        <tissue>Liver</tissue>
    </source>
</reference>
<reference key="14">
    <citation type="journal article" date="2009" name="Mol. Cell. Proteomics">
        <title>Large-scale proteomics analysis of the human kinome.</title>
        <authorList>
            <person name="Oppermann F.S."/>
            <person name="Gnad F."/>
            <person name="Olsen J.V."/>
            <person name="Hornberger R."/>
            <person name="Greff Z."/>
            <person name="Keri G."/>
            <person name="Mann M."/>
            <person name="Daub H."/>
        </authorList>
    </citation>
    <scope>PHOSPHORYLATION [LARGE SCALE ANALYSIS] AT SER-114</scope>
    <scope>IDENTIFICATION BY MASS SPECTROMETRY [LARGE SCALE ANALYSIS]</scope>
</reference>
<reference key="15">
    <citation type="journal article" date="2009" name="Sci. Signal.">
        <title>Quantitative phosphoproteomic analysis of T cell receptor signaling reveals system-wide modulation of protein-protein interactions.</title>
        <authorList>
            <person name="Mayya V."/>
            <person name="Lundgren D.H."/>
            <person name="Hwang S.-I."/>
            <person name="Rezaul K."/>
            <person name="Wu L."/>
            <person name="Eng J.K."/>
            <person name="Rodionov V."/>
            <person name="Han D.K."/>
        </authorList>
    </citation>
    <scope>PHOSPHORYLATION [LARGE SCALE ANALYSIS] AT SER-114</scope>
    <scope>IDENTIFICATION BY MASS SPECTROMETRY [LARGE SCALE ANALYSIS]</scope>
    <source>
        <tissue>Leukemic T-cell</tissue>
    </source>
</reference>
<reference key="16">
    <citation type="journal article" date="2010" name="Sci. Signal.">
        <title>Quantitative phosphoproteomics reveals widespread full phosphorylation site occupancy during mitosis.</title>
        <authorList>
            <person name="Olsen J.V."/>
            <person name="Vermeulen M."/>
            <person name="Santamaria A."/>
            <person name="Kumar C."/>
            <person name="Miller M.L."/>
            <person name="Jensen L.J."/>
            <person name="Gnad F."/>
            <person name="Cox J."/>
            <person name="Jensen T.S."/>
            <person name="Nigg E.A."/>
            <person name="Brunak S."/>
            <person name="Mann M."/>
        </authorList>
    </citation>
    <scope>PHOSPHORYLATION [LARGE SCALE ANALYSIS] AT SER-114</scope>
    <scope>IDENTIFICATION BY MASS SPECTROMETRY [LARGE SCALE ANALYSIS]</scope>
    <source>
        <tissue>Cervix carcinoma</tissue>
    </source>
</reference>
<reference key="17">
    <citation type="journal article" date="2011" name="BMC Syst. Biol.">
        <title>Initial characterization of the human central proteome.</title>
        <authorList>
            <person name="Burkard T.R."/>
            <person name="Planyavsky M."/>
            <person name="Kaupe I."/>
            <person name="Breitwieser F.P."/>
            <person name="Buerckstuemmer T."/>
            <person name="Bennett K.L."/>
            <person name="Superti-Furga G."/>
            <person name="Colinge J."/>
        </authorList>
    </citation>
    <scope>IDENTIFICATION BY MASS SPECTROMETRY [LARGE SCALE ANALYSIS]</scope>
</reference>
<reference key="18">
    <citation type="journal article" date="2011" name="Sci. Signal.">
        <title>System-wide temporal characterization of the proteome and phosphoproteome of human embryonic stem cell differentiation.</title>
        <authorList>
            <person name="Rigbolt K.T."/>
            <person name="Prokhorova T.A."/>
            <person name="Akimov V."/>
            <person name="Henningsen J."/>
            <person name="Johansen P.T."/>
            <person name="Kratchmarova I."/>
            <person name="Kassem M."/>
            <person name="Mann M."/>
            <person name="Olsen J.V."/>
            <person name="Blagoev B."/>
        </authorList>
    </citation>
    <scope>PHOSPHORYLATION [LARGE SCALE ANALYSIS] AT SER-114</scope>
    <scope>IDENTIFICATION BY MASS SPECTROMETRY [LARGE SCALE ANALYSIS]</scope>
</reference>
<reference key="19">
    <citation type="journal article" date="2013" name="J. Proteome Res.">
        <title>Toward a comprehensive characterization of a human cancer cell phosphoproteome.</title>
        <authorList>
            <person name="Zhou H."/>
            <person name="Di Palma S."/>
            <person name="Preisinger C."/>
            <person name="Peng M."/>
            <person name="Polat A.N."/>
            <person name="Heck A.J."/>
            <person name="Mohammed S."/>
        </authorList>
    </citation>
    <scope>PHOSPHORYLATION [LARGE SCALE ANALYSIS] AT THR-7; SER-114 AND SER-135</scope>
    <scope>IDENTIFICATION BY MASS SPECTROMETRY [LARGE SCALE ANALYSIS]</scope>
    <source>
        <tissue>Cervix carcinoma</tissue>
        <tissue>Erythroleukemia</tissue>
    </source>
</reference>
<reference key="20">
    <citation type="journal article" date="2014" name="J. Proteomics">
        <title>An enzyme assisted RP-RPLC approach for in-depth analysis of human liver phosphoproteome.</title>
        <authorList>
            <person name="Bian Y."/>
            <person name="Song C."/>
            <person name="Cheng K."/>
            <person name="Dong M."/>
            <person name="Wang F."/>
            <person name="Huang J."/>
            <person name="Sun D."/>
            <person name="Wang L."/>
            <person name="Ye M."/>
            <person name="Zou H."/>
        </authorList>
    </citation>
    <scope>PHOSPHORYLATION [LARGE SCALE ANALYSIS] AT SER-114</scope>
    <scope>IDENTIFICATION BY MASS SPECTROMETRY [LARGE SCALE ANALYSIS]</scope>
    <source>
        <tissue>Liver</tissue>
    </source>
</reference>
<reference key="21">
    <citation type="journal article" date="2015" name="Mol. Cell. Proteomics">
        <title>The last enzyme of the de novo purine synthesis pathway 5-aminoimidazole-4-carboxamide ribonucleotide formyltransferase/IMP cyclohydrolase (ATIC) plays a central role in insulin signaling and the Golgi/endosomes protein network.</title>
        <authorList>
            <person name="Boutchueng-Djidjou M."/>
            <person name="Collard-Simard G."/>
            <person name="Fortier S."/>
            <person name="Hebert S.S."/>
            <person name="Kelly I."/>
            <person name="Landry C.R."/>
            <person name="Faure R.L."/>
        </authorList>
    </citation>
    <scope>FUNCTION</scope>
    <scope>SUBUNIT</scope>
</reference>
<reference key="22">
    <citation type="journal article" date="2015" name="Proteomics">
        <title>N-terminome analysis of the human mitochondrial proteome.</title>
        <authorList>
            <person name="Vaca Jacome A.S."/>
            <person name="Rabilloud T."/>
            <person name="Schaeffer-Reiss C."/>
            <person name="Rompais M."/>
            <person name="Ayoub D."/>
            <person name="Lane L."/>
            <person name="Bairoch A."/>
            <person name="Van Dorsselaer A."/>
            <person name="Carapito C."/>
        </authorList>
    </citation>
    <scope>ACETYLATION [LARGE SCALE ANALYSIS] AT MET-1</scope>
    <scope>IDENTIFICATION BY MASS SPECTROMETRY [LARGE SCALE ANALYSIS]</scope>
</reference>
<keyword id="KW-0007">Acetylation</keyword>
<keyword id="KW-0025">Alternative splicing</keyword>
<keyword id="KW-0175">Coiled coil</keyword>
<keyword id="KW-0256">Endoplasmic reticulum</keyword>
<keyword id="KW-0275">Fatty acid biosynthesis</keyword>
<keyword id="KW-0276">Fatty acid metabolism</keyword>
<keyword id="KW-0444">Lipid biosynthesis</keyword>
<keyword id="KW-0443">Lipid metabolism</keyword>
<keyword id="KW-0456">Lyase</keyword>
<keyword id="KW-0472">Membrane</keyword>
<keyword id="KW-0597">Phosphoprotein</keyword>
<keyword id="KW-1267">Proteomics identification</keyword>
<keyword id="KW-1185">Reference proteome</keyword>
<keyword id="KW-0812">Transmembrane</keyword>
<keyword id="KW-1133">Transmembrane helix</keyword>
<proteinExistence type="evidence at protein level"/>
<feature type="chain" id="PRO_0000313724" description="Very-long-chain (3R)-3-hydroxyacyl-CoA dehydratase 3">
    <location>
        <begin position="1"/>
        <end position="362"/>
    </location>
</feature>
<feature type="topological domain" description="Cytoplasmic" evidence="3">
    <location>
        <begin position="1"/>
        <end position="149"/>
    </location>
</feature>
<feature type="transmembrane region" description="Helical" evidence="3">
    <location>
        <begin position="150"/>
        <end position="170"/>
    </location>
</feature>
<feature type="topological domain" description="Lumenal" evidence="3">
    <location>
        <begin position="171"/>
        <end position="185"/>
    </location>
</feature>
<feature type="transmembrane region" description="Helical" evidence="3">
    <location>
        <begin position="186"/>
        <end position="207"/>
    </location>
</feature>
<feature type="topological domain" description="Cytoplasmic" evidence="3">
    <location>
        <begin position="208"/>
        <end position="217"/>
    </location>
</feature>
<feature type="transmembrane region" description="Helical" evidence="3">
    <location>
        <begin position="218"/>
        <end position="235"/>
    </location>
</feature>
<feature type="topological domain" description="Lumenal" evidence="3">
    <location>
        <begin position="236"/>
        <end position="241"/>
    </location>
</feature>
<feature type="transmembrane region" description="Helical" evidence="3">
    <location>
        <begin position="242"/>
        <end position="256"/>
    </location>
</feature>
<feature type="topological domain" description="Cytoplasmic" evidence="3">
    <location>
        <begin position="257"/>
        <end position="279"/>
    </location>
</feature>
<feature type="transmembrane region" description="Helical" evidence="3">
    <location>
        <begin position="280"/>
        <end position="298"/>
    </location>
</feature>
<feature type="topological domain" description="Lumenal" evidence="3">
    <location>
        <begin position="299"/>
        <end position="322"/>
    </location>
</feature>
<feature type="transmembrane region" description="Helical" evidence="3">
    <location>
        <begin position="323"/>
        <end position="343"/>
    </location>
</feature>
<feature type="topological domain" description="Cytoplasmic" evidence="3">
    <location>
        <begin position="344"/>
        <end position="362"/>
    </location>
</feature>
<feature type="domain" description="CS" evidence="4">
    <location>
        <begin position="5"/>
        <end position="94"/>
    </location>
</feature>
<feature type="coiled-coil region" evidence="3">
    <location>
        <begin position="111"/>
        <end position="136"/>
    </location>
</feature>
<feature type="active site" evidence="1">
    <location>
        <position position="286"/>
    </location>
</feature>
<feature type="active site" evidence="1">
    <location>
        <position position="293"/>
    </location>
</feature>
<feature type="modified residue" description="N-acetylmethionine" evidence="25">
    <location>
        <position position="1"/>
    </location>
</feature>
<feature type="modified residue" description="Phosphothreonine" evidence="23">
    <location>
        <position position="7"/>
    </location>
</feature>
<feature type="modified residue" description="Phosphoserine" evidence="15 16 17 18 19 20 21 22 23 24">
    <location>
        <position position="114"/>
    </location>
</feature>
<feature type="modified residue" description="Phosphoserine" evidence="23">
    <location>
        <position position="135"/>
    </location>
</feature>
<feature type="splice variant" id="VSP_056070" description="In isoform 2." evidence="10">
    <location>
        <begin position="69"/>
        <end position="123"/>
    </location>
</feature>
<feature type="sequence variant" id="VAR_037712" description="In dbSNP:rs11632737.">
    <original>E</original>
    <variation>K</variation>
    <location>
        <position position="56"/>
    </location>
</feature>
<feature type="sequence variant" id="VAR_037713" description="In dbSNP:rs2279854.">
    <original>M</original>
    <variation>L</variation>
    <location>
        <position position="269"/>
    </location>
</feature>
<feature type="sequence conflict" description="In Ref. 3; BAB55101." evidence="12" ref="3">
    <original>E</original>
    <variation>K</variation>
    <location>
        <position position="60"/>
    </location>
</feature>
<feature type="sequence conflict" description="In Ref. 3; BAC11277." evidence="12" ref="3">
    <original>F</original>
    <variation>I</variation>
    <location>
        <position position="245"/>
    </location>
</feature>
<feature type="sequence conflict" description="In Ref. 5; AAH35508." evidence="12" ref="5">
    <original>W</original>
    <variation>G</variation>
    <location>
        <position position="282"/>
    </location>
</feature>
<feature type="sequence conflict" description="In Ref. 2; AAF29085." evidence="12" ref="2">
    <original>A</original>
    <variation>V</variation>
    <location>
        <position position="292"/>
    </location>
</feature>
<feature type="sequence conflict" description="In Ref. 1; CAB69070." evidence="12" ref="1">
    <original>RRYGQKKKKIH</original>
    <variation>LKMRAGAVAHACDPSALGG</variation>
    <location>
        <begin position="352"/>
        <end position="362"/>
    </location>
</feature>
<feature type="sequence conflict" description="In Ref. 5; AAH35508." evidence="12" ref="5">
    <original>I</original>
    <variation>K</variation>
    <location>
        <position position="361"/>
    </location>
</feature>
<comment type="function">
    <text evidence="5 7 8">Catalyzes the third of the four reactions of the long-chain fatty acids elongation cycle. This endoplasmic reticulum-bound enzymatic process, allows the addition of two carbons to the chain of long- and very long-chain fatty acids/VLCFAs per cycle. This enzyme catalyzes the dehydration of the 3-hydroxyacyl-CoA intermediate into trans-2,3-enoyl-CoA, within each cycle of fatty acid elongation. Thereby, it participates in the production of VLCFAs of different chain lengths that are involved in multiple biological processes as precursors of membrane lipids and lipid mediators. May be involved in Rac1-signaling pathways leading to the modulation of gene expression. Promotes insulin receptor/INSR autophosphorylation and is involved in INSR internalization (PubMed:25687571).</text>
</comment>
<comment type="catalytic activity">
    <reaction evidence="7">
        <text>a very-long-chain (3R)-3-hydroxyacyl-CoA = a very-long-chain (2E)-enoyl-CoA + H2O</text>
        <dbReference type="Rhea" id="RHEA:45812"/>
        <dbReference type="ChEBI" id="CHEBI:15377"/>
        <dbReference type="ChEBI" id="CHEBI:83728"/>
        <dbReference type="ChEBI" id="CHEBI:85440"/>
        <dbReference type="EC" id="4.2.1.134"/>
    </reaction>
    <physiologicalReaction direction="left-to-right" evidence="13">
        <dbReference type="Rhea" id="RHEA:45813"/>
    </physiologicalReaction>
</comment>
<comment type="catalytic activity">
    <reaction evidence="7">
        <text>(3R)-hydroxyhexadecanoyl-CoA = (2E)-hexadecenoyl-CoA + H2O</text>
        <dbReference type="Rhea" id="RHEA:39159"/>
        <dbReference type="ChEBI" id="CHEBI:15377"/>
        <dbReference type="ChEBI" id="CHEBI:61526"/>
        <dbReference type="ChEBI" id="CHEBI:74278"/>
    </reaction>
    <physiologicalReaction direction="left-to-right" evidence="13">
        <dbReference type="Rhea" id="RHEA:39160"/>
    </physiologicalReaction>
</comment>
<comment type="biophysicochemical properties">
    <kinetics>
        <KM evidence="7">49.5 uM for 3-hydroxypalmitoyl-CoA (at 37 degrees Celsius)</KM>
    </kinetics>
</comment>
<comment type="pathway">
    <text evidence="7">Lipid metabolism; fatty acid biosynthesis.</text>
</comment>
<comment type="subunit">
    <text evidence="5 7 8">May interact with enzymes of the ELO family (including ELOVL1); with those enzymes that mediate condensation, the first of the four steps of the reaction cycle responsible for fatty acids elongation, may be part of a larger fatty acids elongase complex (PubMed:18554506). Interacts with RAC1 (PubMed:10747961). Associates with internalized insulin receptor/INSR complexes on Golgi/endosomal membranes; HACD3/PTPLAD1 together with ATIC and PRKAA2/AMPK2 is proposed to be part of a signaling network regulating INSR autophosphorylation and endocytosis (PubMed:25687571).</text>
</comment>
<comment type="interaction">
    <interactant intactId="EBI-359013">
        <id>Q9P035</id>
    </interactant>
    <interactant intactId="EBI-349854">
        <id>P13569</id>
        <label>CFTR</label>
    </interactant>
    <organismsDiffer>false</organismsDiffer>
    <experiments>15</experiments>
</comment>
<comment type="interaction">
    <interactant intactId="EBI-359013">
        <id>Q9P035</id>
    </interactant>
    <interactant intactId="EBI-1059156">
        <id>Q9P0L0</id>
        <label>VAPA</label>
    </interactant>
    <organismsDiffer>false</organismsDiffer>
    <experiments>2</experiments>
</comment>
<comment type="interaction">
    <interactant intactId="EBI-359013">
        <id>Q9P035</id>
    </interactant>
    <interactant intactId="EBI-8803426">
        <id>PRO_0000278740</id>
        <dbReference type="UniProtKB" id="Q03463"/>
    </interactant>
    <organismsDiffer>true</organismsDiffer>
    <experiments>2</experiments>
</comment>
<comment type="interaction">
    <interactant intactId="EBI-359013">
        <id>Q9P035</id>
    </interactant>
    <interactant intactId="EBI-6927873">
        <id>PRO_0000045602</id>
        <dbReference type="UniProtKB" id="Q99IB8"/>
    </interactant>
    <organismsDiffer>true</organismsDiffer>
    <experiments>2</experiments>
</comment>
<comment type="interaction">
    <interactant intactId="EBI-359013">
        <id>Q9P035</id>
    </interactant>
    <interactant intactId="EBI-6863748">
        <id>PRO_0000037551</id>
        <dbReference type="UniProtKB" id="Q9WMX2"/>
    </interactant>
    <organismsDiffer>true</organismsDiffer>
    <experiments>3</experiments>
</comment>
<comment type="subcellular location">
    <subcellularLocation>
        <location evidence="7">Endoplasmic reticulum membrane</location>
        <topology evidence="7">Multi-pass membrane protein</topology>
    </subcellularLocation>
</comment>
<comment type="alternative products">
    <event type="alternative splicing"/>
    <isoform>
        <id>Q9P035-1</id>
        <name>1</name>
        <sequence type="displayed"/>
    </isoform>
    <isoform>
        <id>Q9P035-2</id>
        <name>2</name>
        <sequence type="described" ref="VSP_056070"/>
    </isoform>
</comment>
<comment type="tissue specificity">
    <text evidence="5 7">Highly expressed in testis, kidney, brain, liver and weakly in skeletal muscle, spleen and heart. No expression detected in leukocytes.</text>
</comment>
<comment type="induction">
    <text evidence="6">By AKAP12 and histone deacetylase inhibitors such as sodium butyrate.</text>
</comment>
<comment type="similarity">
    <text evidence="12">Belongs to the very long-chain fatty acids dehydratase HACD family.</text>
</comment>
<comment type="caution">
    <text evidence="2 13">Shares some similarity with tyrosine phosphatase proteins but it has probably no phosphatase activity.</text>
</comment>
<comment type="sequence caution" evidence="12">
    <conflict type="frameshift">
        <sequence resource="EMBL-CDS" id="AAF29085"/>
    </conflict>
</comment>
<comment type="sequence caution" evidence="12">
    <conflict type="frameshift">
        <sequence resource="EMBL-CDS" id="BAC11249"/>
    </conflict>
</comment>
<protein>
    <recommendedName>
        <fullName evidence="12">Very-long-chain (3R)-3-hydroxyacyl-CoA dehydratase 3</fullName>
        <ecNumber evidence="7">4.2.1.134</ecNumber>
    </recommendedName>
    <alternativeName>
        <fullName evidence="11">3-hydroxyacyl-CoA dehydratase 3</fullName>
        <shortName evidence="11">HACD3</shortName>
    </alternativeName>
    <alternativeName>
        <fullName evidence="9">Butyrate-induced protein 1</fullName>
        <shortName evidence="9">B-ind1</shortName>
        <shortName evidence="9">hB-ind1</shortName>
    </alternativeName>
    <alternativeName>
        <fullName evidence="14">Protein-tyrosine phosphatase-like A domain-containing protein 1</fullName>
    </alternativeName>
</protein>